<gene>
    <name evidence="1" type="primary">rplS</name>
    <name type="ordered locus">BDI_2341</name>
</gene>
<proteinExistence type="inferred from homology"/>
<name>RL19_PARD8</name>
<organism>
    <name type="scientific">Parabacteroides distasonis (strain ATCC 8503 / DSM 20701 / CIP 104284 / JCM 5825 / NCTC 11152)</name>
    <dbReference type="NCBI Taxonomy" id="435591"/>
    <lineage>
        <taxon>Bacteria</taxon>
        <taxon>Pseudomonadati</taxon>
        <taxon>Bacteroidota</taxon>
        <taxon>Bacteroidia</taxon>
        <taxon>Bacteroidales</taxon>
        <taxon>Tannerellaceae</taxon>
        <taxon>Parabacteroides</taxon>
    </lineage>
</organism>
<sequence length="115" mass="13256">MDLIKIAEEAFATKKELPSFKSGDTITVAYRIKEGNKERIQQYRGVVIRISGHGDKKRFTVRKMSENVGVERIFPIESPFIESITVNKVGKVRRAKLYYLRALTGKKARIKEKRV</sequence>
<comment type="function">
    <text evidence="1">This protein is located at the 30S-50S ribosomal subunit interface and may play a role in the structure and function of the aminoacyl-tRNA binding site.</text>
</comment>
<comment type="similarity">
    <text evidence="1">Belongs to the bacterial ribosomal protein bL19 family.</text>
</comment>
<protein>
    <recommendedName>
        <fullName evidence="1">Large ribosomal subunit protein bL19</fullName>
    </recommendedName>
    <alternativeName>
        <fullName evidence="2">50S ribosomal protein L19</fullName>
    </alternativeName>
</protein>
<reference key="1">
    <citation type="journal article" date="2007" name="PLoS Biol.">
        <title>Evolution of symbiotic bacteria in the distal human intestine.</title>
        <authorList>
            <person name="Xu J."/>
            <person name="Mahowald M.A."/>
            <person name="Ley R.E."/>
            <person name="Lozupone C.A."/>
            <person name="Hamady M."/>
            <person name="Martens E.C."/>
            <person name="Henrissat B."/>
            <person name="Coutinho P.M."/>
            <person name="Minx P."/>
            <person name="Latreille P."/>
            <person name="Cordum H."/>
            <person name="Van Brunt A."/>
            <person name="Kim K."/>
            <person name="Fulton R.S."/>
            <person name="Fulton L.A."/>
            <person name="Clifton S.W."/>
            <person name="Wilson R.K."/>
            <person name="Knight R.D."/>
            <person name="Gordon J.I."/>
        </authorList>
    </citation>
    <scope>NUCLEOTIDE SEQUENCE [LARGE SCALE GENOMIC DNA]</scope>
    <source>
        <strain>ATCC 8503 / DSM 20701 / CIP 104284 / JCM 5825 / NCTC 11152</strain>
    </source>
</reference>
<accession>A6LEF2</accession>
<feature type="chain" id="PRO_1000049713" description="Large ribosomal subunit protein bL19">
    <location>
        <begin position="1"/>
        <end position="115"/>
    </location>
</feature>
<evidence type="ECO:0000255" key="1">
    <source>
        <dbReference type="HAMAP-Rule" id="MF_00402"/>
    </source>
</evidence>
<evidence type="ECO:0000305" key="2"/>
<keyword id="KW-1185">Reference proteome</keyword>
<keyword id="KW-0687">Ribonucleoprotein</keyword>
<keyword id="KW-0689">Ribosomal protein</keyword>
<dbReference type="EMBL" id="CP000140">
    <property type="protein sequence ID" value="ABR44066.1"/>
    <property type="molecule type" value="Genomic_DNA"/>
</dbReference>
<dbReference type="RefSeq" id="WP_005854040.1">
    <property type="nucleotide sequence ID" value="NZ_LR215978.1"/>
</dbReference>
<dbReference type="SMR" id="A6LEF2"/>
<dbReference type="STRING" id="435591.BDI_2341"/>
<dbReference type="PaxDb" id="435591-BDI_2341"/>
<dbReference type="GeneID" id="93522330"/>
<dbReference type="KEGG" id="pdi:BDI_2341"/>
<dbReference type="eggNOG" id="COG0335">
    <property type="taxonomic scope" value="Bacteria"/>
</dbReference>
<dbReference type="HOGENOM" id="CLU_103507_2_2_10"/>
<dbReference type="BioCyc" id="PDIS435591:G1G5A-2404-MONOMER"/>
<dbReference type="Proteomes" id="UP000000566">
    <property type="component" value="Chromosome"/>
</dbReference>
<dbReference type="GO" id="GO:0022625">
    <property type="term" value="C:cytosolic large ribosomal subunit"/>
    <property type="evidence" value="ECO:0007669"/>
    <property type="project" value="TreeGrafter"/>
</dbReference>
<dbReference type="GO" id="GO:0003735">
    <property type="term" value="F:structural constituent of ribosome"/>
    <property type="evidence" value="ECO:0007669"/>
    <property type="project" value="InterPro"/>
</dbReference>
<dbReference type="GO" id="GO:0006412">
    <property type="term" value="P:translation"/>
    <property type="evidence" value="ECO:0007669"/>
    <property type="project" value="UniProtKB-UniRule"/>
</dbReference>
<dbReference type="FunFam" id="2.30.30.790:FF:000001">
    <property type="entry name" value="50S ribosomal protein L19"/>
    <property type="match status" value="1"/>
</dbReference>
<dbReference type="Gene3D" id="2.30.30.790">
    <property type="match status" value="1"/>
</dbReference>
<dbReference type="HAMAP" id="MF_00402">
    <property type="entry name" value="Ribosomal_bL19"/>
    <property type="match status" value="1"/>
</dbReference>
<dbReference type="InterPro" id="IPR001857">
    <property type="entry name" value="Ribosomal_bL19"/>
</dbReference>
<dbReference type="InterPro" id="IPR018257">
    <property type="entry name" value="Ribosomal_bL19_CS"/>
</dbReference>
<dbReference type="InterPro" id="IPR038657">
    <property type="entry name" value="Ribosomal_bL19_sf"/>
</dbReference>
<dbReference type="InterPro" id="IPR008991">
    <property type="entry name" value="Translation_prot_SH3-like_sf"/>
</dbReference>
<dbReference type="NCBIfam" id="TIGR01024">
    <property type="entry name" value="rplS_bact"/>
    <property type="match status" value="1"/>
</dbReference>
<dbReference type="PANTHER" id="PTHR15680:SF9">
    <property type="entry name" value="LARGE RIBOSOMAL SUBUNIT PROTEIN BL19M"/>
    <property type="match status" value="1"/>
</dbReference>
<dbReference type="PANTHER" id="PTHR15680">
    <property type="entry name" value="RIBOSOMAL PROTEIN L19"/>
    <property type="match status" value="1"/>
</dbReference>
<dbReference type="Pfam" id="PF01245">
    <property type="entry name" value="Ribosomal_L19"/>
    <property type="match status" value="1"/>
</dbReference>
<dbReference type="PIRSF" id="PIRSF002191">
    <property type="entry name" value="Ribosomal_L19"/>
    <property type="match status" value="1"/>
</dbReference>
<dbReference type="PRINTS" id="PR00061">
    <property type="entry name" value="RIBOSOMALL19"/>
</dbReference>
<dbReference type="SUPFAM" id="SSF50104">
    <property type="entry name" value="Translation proteins SH3-like domain"/>
    <property type="match status" value="1"/>
</dbReference>
<dbReference type="PROSITE" id="PS01015">
    <property type="entry name" value="RIBOSOMAL_L19"/>
    <property type="match status" value="1"/>
</dbReference>